<proteinExistence type="inferred from homology"/>
<feature type="chain" id="PRO_0000320886" description="Protein translocase subunit SecA">
    <location>
        <begin position="1"/>
        <end position="910"/>
    </location>
</feature>
<feature type="region of interest" description="Disordered" evidence="2">
    <location>
        <begin position="561"/>
        <end position="584"/>
    </location>
</feature>
<feature type="region of interest" description="Disordered" evidence="2">
    <location>
        <begin position="835"/>
        <end position="910"/>
    </location>
</feature>
<feature type="compositionally biased region" description="Basic and acidic residues" evidence="2">
    <location>
        <begin position="561"/>
        <end position="571"/>
    </location>
</feature>
<feature type="compositionally biased region" description="Basic and acidic residues" evidence="2">
    <location>
        <begin position="841"/>
        <end position="853"/>
    </location>
</feature>
<feature type="compositionally biased region" description="Basic and acidic residues" evidence="2">
    <location>
        <begin position="880"/>
        <end position="890"/>
    </location>
</feature>
<feature type="compositionally biased region" description="Basic residues" evidence="2">
    <location>
        <begin position="900"/>
        <end position="910"/>
    </location>
</feature>
<feature type="binding site" evidence="1">
    <location>
        <position position="87"/>
    </location>
    <ligand>
        <name>ATP</name>
        <dbReference type="ChEBI" id="CHEBI:30616"/>
    </ligand>
</feature>
<feature type="binding site" evidence="1">
    <location>
        <begin position="105"/>
        <end position="109"/>
    </location>
    <ligand>
        <name>ATP</name>
        <dbReference type="ChEBI" id="CHEBI:30616"/>
    </ligand>
</feature>
<feature type="binding site" evidence="1">
    <location>
        <position position="512"/>
    </location>
    <ligand>
        <name>ATP</name>
        <dbReference type="ChEBI" id="CHEBI:30616"/>
    </ligand>
</feature>
<feature type="binding site" evidence="1">
    <location>
        <position position="894"/>
    </location>
    <ligand>
        <name>Zn(2+)</name>
        <dbReference type="ChEBI" id="CHEBI:29105"/>
    </ligand>
</feature>
<feature type="binding site" evidence="1">
    <location>
        <position position="896"/>
    </location>
    <ligand>
        <name>Zn(2+)</name>
        <dbReference type="ChEBI" id="CHEBI:29105"/>
    </ligand>
</feature>
<feature type="binding site" evidence="1">
    <location>
        <position position="905"/>
    </location>
    <ligand>
        <name>Zn(2+)</name>
        <dbReference type="ChEBI" id="CHEBI:29105"/>
    </ligand>
</feature>
<feature type="binding site" evidence="1">
    <location>
        <position position="906"/>
    </location>
    <ligand>
        <name>Zn(2+)</name>
        <dbReference type="ChEBI" id="CHEBI:29105"/>
    </ligand>
</feature>
<gene>
    <name evidence="1" type="primary">secA</name>
    <name type="ordered locus">PBPRA3208</name>
</gene>
<dbReference type="EC" id="7.4.2.8" evidence="1"/>
<dbReference type="EMBL" id="CR378673">
    <property type="protein sequence ID" value="CAG21514.1"/>
    <property type="molecule type" value="Genomic_DNA"/>
</dbReference>
<dbReference type="RefSeq" id="WP_011219768.1">
    <property type="nucleotide sequence ID" value="NC_006370.1"/>
</dbReference>
<dbReference type="SMR" id="Q6LMG3"/>
<dbReference type="STRING" id="298386.PBPRA3208"/>
<dbReference type="KEGG" id="ppr:PBPRA3208"/>
<dbReference type="eggNOG" id="COG0653">
    <property type="taxonomic scope" value="Bacteria"/>
</dbReference>
<dbReference type="HOGENOM" id="CLU_005314_3_0_6"/>
<dbReference type="Proteomes" id="UP000000593">
    <property type="component" value="Chromosome 1"/>
</dbReference>
<dbReference type="GO" id="GO:0031522">
    <property type="term" value="C:cell envelope Sec protein transport complex"/>
    <property type="evidence" value="ECO:0007669"/>
    <property type="project" value="TreeGrafter"/>
</dbReference>
<dbReference type="GO" id="GO:0005829">
    <property type="term" value="C:cytosol"/>
    <property type="evidence" value="ECO:0007669"/>
    <property type="project" value="TreeGrafter"/>
</dbReference>
<dbReference type="GO" id="GO:0005886">
    <property type="term" value="C:plasma membrane"/>
    <property type="evidence" value="ECO:0007669"/>
    <property type="project" value="UniProtKB-SubCell"/>
</dbReference>
<dbReference type="GO" id="GO:0005524">
    <property type="term" value="F:ATP binding"/>
    <property type="evidence" value="ECO:0007669"/>
    <property type="project" value="UniProtKB-UniRule"/>
</dbReference>
<dbReference type="GO" id="GO:0046872">
    <property type="term" value="F:metal ion binding"/>
    <property type="evidence" value="ECO:0007669"/>
    <property type="project" value="UniProtKB-KW"/>
</dbReference>
<dbReference type="GO" id="GO:0008564">
    <property type="term" value="F:protein-exporting ATPase activity"/>
    <property type="evidence" value="ECO:0007669"/>
    <property type="project" value="UniProtKB-EC"/>
</dbReference>
<dbReference type="GO" id="GO:0065002">
    <property type="term" value="P:intracellular protein transmembrane transport"/>
    <property type="evidence" value="ECO:0007669"/>
    <property type="project" value="UniProtKB-UniRule"/>
</dbReference>
<dbReference type="GO" id="GO:0017038">
    <property type="term" value="P:protein import"/>
    <property type="evidence" value="ECO:0007669"/>
    <property type="project" value="InterPro"/>
</dbReference>
<dbReference type="GO" id="GO:0006605">
    <property type="term" value="P:protein targeting"/>
    <property type="evidence" value="ECO:0007669"/>
    <property type="project" value="UniProtKB-UniRule"/>
</dbReference>
<dbReference type="GO" id="GO:0043952">
    <property type="term" value="P:protein transport by the Sec complex"/>
    <property type="evidence" value="ECO:0007669"/>
    <property type="project" value="TreeGrafter"/>
</dbReference>
<dbReference type="CDD" id="cd17928">
    <property type="entry name" value="DEXDc_SecA"/>
    <property type="match status" value="1"/>
</dbReference>
<dbReference type="CDD" id="cd18803">
    <property type="entry name" value="SF2_C_secA"/>
    <property type="match status" value="1"/>
</dbReference>
<dbReference type="FunFam" id="1.10.3060.10:FF:000001">
    <property type="entry name" value="Preprotein translocase subunit SecA"/>
    <property type="match status" value="1"/>
</dbReference>
<dbReference type="FunFam" id="3.40.50.300:FF:000081">
    <property type="entry name" value="Preprotein translocase subunit SecA"/>
    <property type="match status" value="1"/>
</dbReference>
<dbReference type="FunFam" id="3.40.50.300:FF:000113">
    <property type="entry name" value="Preprotein translocase subunit SecA"/>
    <property type="match status" value="1"/>
</dbReference>
<dbReference type="FunFam" id="3.90.1440.10:FF:000001">
    <property type="entry name" value="Preprotein translocase subunit SecA"/>
    <property type="match status" value="1"/>
</dbReference>
<dbReference type="Gene3D" id="1.10.3060.10">
    <property type="entry name" value="Helical scaffold and wing domains of SecA"/>
    <property type="match status" value="1"/>
</dbReference>
<dbReference type="Gene3D" id="3.40.50.300">
    <property type="entry name" value="P-loop containing nucleotide triphosphate hydrolases"/>
    <property type="match status" value="2"/>
</dbReference>
<dbReference type="Gene3D" id="3.90.1440.10">
    <property type="entry name" value="SecA, preprotein cross-linking domain"/>
    <property type="match status" value="1"/>
</dbReference>
<dbReference type="HAMAP" id="MF_01382">
    <property type="entry name" value="SecA"/>
    <property type="match status" value="1"/>
</dbReference>
<dbReference type="InterPro" id="IPR014001">
    <property type="entry name" value="Helicase_ATP-bd"/>
</dbReference>
<dbReference type="InterPro" id="IPR001650">
    <property type="entry name" value="Helicase_C-like"/>
</dbReference>
<dbReference type="InterPro" id="IPR027417">
    <property type="entry name" value="P-loop_NTPase"/>
</dbReference>
<dbReference type="InterPro" id="IPR004027">
    <property type="entry name" value="SEC_C_motif"/>
</dbReference>
<dbReference type="InterPro" id="IPR000185">
    <property type="entry name" value="SecA"/>
</dbReference>
<dbReference type="InterPro" id="IPR020937">
    <property type="entry name" value="SecA_CS"/>
</dbReference>
<dbReference type="InterPro" id="IPR011115">
    <property type="entry name" value="SecA_DEAD"/>
</dbReference>
<dbReference type="InterPro" id="IPR014018">
    <property type="entry name" value="SecA_motor_DEAD"/>
</dbReference>
<dbReference type="InterPro" id="IPR011130">
    <property type="entry name" value="SecA_preprotein_X-link_dom"/>
</dbReference>
<dbReference type="InterPro" id="IPR044722">
    <property type="entry name" value="SecA_SF2_C"/>
</dbReference>
<dbReference type="InterPro" id="IPR011116">
    <property type="entry name" value="SecA_Wing/Scaffold"/>
</dbReference>
<dbReference type="InterPro" id="IPR036266">
    <property type="entry name" value="SecA_Wing/Scaffold_sf"/>
</dbReference>
<dbReference type="InterPro" id="IPR036670">
    <property type="entry name" value="SecA_X-link_sf"/>
</dbReference>
<dbReference type="NCBIfam" id="NF009538">
    <property type="entry name" value="PRK12904.1"/>
    <property type="match status" value="1"/>
</dbReference>
<dbReference type="NCBIfam" id="TIGR00963">
    <property type="entry name" value="secA"/>
    <property type="match status" value="1"/>
</dbReference>
<dbReference type="PANTHER" id="PTHR30612:SF0">
    <property type="entry name" value="CHLOROPLAST PROTEIN-TRANSPORTING ATPASE"/>
    <property type="match status" value="1"/>
</dbReference>
<dbReference type="PANTHER" id="PTHR30612">
    <property type="entry name" value="SECA INNER MEMBRANE COMPONENT OF SEC PROTEIN SECRETION SYSTEM"/>
    <property type="match status" value="1"/>
</dbReference>
<dbReference type="Pfam" id="PF21090">
    <property type="entry name" value="P-loop_SecA"/>
    <property type="match status" value="1"/>
</dbReference>
<dbReference type="Pfam" id="PF02810">
    <property type="entry name" value="SEC-C"/>
    <property type="match status" value="1"/>
</dbReference>
<dbReference type="Pfam" id="PF07517">
    <property type="entry name" value="SecA_DEAD"/>
    <property type="match status" value="1"/>
</dbReference>
<dbReference type="Pfam" id="PF01043">
    <property type="entry name" value="SecA_PP_bind"/>
    <property type="match status" value="1"/>
</dbReference>
<dbReference type="Pfam" id="PF07516">
    <property type="entry name" value="SecA_SW"/>
    <property type="match status" value="1"/>
</dbReference>
<dbReference type="PRINTS" id="PR00906">
    <property type="entry name" value="SECA"/>
</dbReference>
<dbReference type="SMART" id="SM00957">
    <property type="entry name" value="SecA_DEAD"/>
    <property type="match status" value="1"/>
</dbReference>
<dbReference type="SMART" id="SM00958">
    <property type="entry name" value="SecA_PP_bind"/>
    <property type="match status" value="1"/>
</dbReference>
<dbReference type="SUPFAM" id="SSF81886">
    <property type="entry name" value="Helical scaffold and wing domains of SecA"/>
    <property type="match status" value="1"/>
</dbReference>
<dbReference type="SUPFAM" id="SSF52540">
    <property type="entry name" value="P-loop containing nucleoside triphosphate hydrolases"/>
    <property type="match status" value="2"/>
</dbReference>
<dbReference type="SUPFAM" id="SSF81767">
    <property type="entry name" value="Pre-protein crosslinking domain of SecA"/>
    <property type="match status" value="1"/>
</dbReference>
<dbReference type="PROSITE" id="PS01312">
    <property type="entry name" value="SECA"/>
    <property type="match status" value="1"/>
</dbReference>
<dbReference type="PROSITE" id="PS51196">
    <property type="entry name" value="SECA_MOTOR_DEAD"/>
    <property type="match status" value="1"/>
</dbReference>
<sequence length="910" mass="103610">MLSKLLTKVIGSRNDRTLRRMRKIVDEINKLEPQFDSLQDEDLKAKTVEFRERLDQGESLDLLLPEAFATVREASKRVFGMRHFDVQLLGGMVLNNCQIAEMRTGEGKTLTATLPAYLNALTGKGVHIVTVNDYLAARDAETNRALFEFLGMTVGINVPNMPPQAKKEAYSADVLYGTNNEFGFDYLRDNMAFRPEDRVQRERFFAVVDEVDSILIDEARTPLIISGPAEDSSDLYTRINLLIPQLVKQDQEDSEDFRGDGHYTVDEKSKQTHLTENGQEFVEELLTQQGMMAEDDTLYSPSNISLLHHITAALRAHVLFERDVDYIVKDDEVIIVDEHTGRTMPGRRWSEGLHQAVEAKEGVKIQNENQTLASITFQNYFRLYSKLSGMTGTADTEAFEFQSIYGLETVVMPTNKPMVRDDMGDLVYMTEAEKFAAICEDIKERFAKGQPVLVGTVSIEKSELLSNALKKEGIKHEVLNAKFHEKEAYIIANAGQSGAVTIATNMAGRGTDIVLGGSWQEEISNLQDPTDAQIAQIKVDWKVRHETVLAAGGLHITGTERHESRRIDNQLRGRSGRQGDAGSSRFYLSMEDGLMRIFASDRVSNMMKKLGMEEGEAIEHPWVTKAIENAQRKVEGRNFDIRKQLLEFDDVANDQRQVVYELRDELMNADDISGMITQNRDDVILAVVDTYIPQQSLEEMWDIKGLEERLKADFDLELPIQEWLDTEEKLYEEALRERIVAKAIEVYQQKEEVVGAEVLRNFEKTVMLQNLDTLWKEHLAAMDHLRQGIHLRGYAQKNPKQEYKRESFELFEEMLDSLKSDVVSILSKVRVQQQEEVDRMEEERRQQAEELARRQQYQHQNAASQIADESDAGQPAESGTFEREARKVGRNEPCPCGSGKKYKQCHGKIN</sequence>
<organism>
    <name type="scientific">Photobacterium profundum (strain SS9)</name>
    <dbReference type="NCBI Taxonomy" id="298386"/>
    <lineage>
        <taxon>Bacteria</taxon>
        <taxon>Pseudomonadati</taxon>
        <taxon>Pseudomonadota</taxon>
        <taxon>Gammaproteobacteria</taxon>
        <taxon>Vibrionales</taxon>
        <taxon>Vibrionaceae</taxon>
        <taxon>Photobacterium</taxon>
    </lineage>
</organism>
<evidence type="ECO:0000255" key="1">
    <source>
        <dbReference type="HAMAP-Rule" id="MF_01382"/>
    </source>
</evidence>
<evidence type="ECO:0000256" key="2">
    <source>
        <dbReference type="SAM" id="MobiDB-lite"/>
    </source>
</evidence>
<name>SECA_PHOPR</name>
<accession>Q6LMG3</accession>
<comment type="function">
    <text evidence="1">Part of the Sec protein translocase complex. Interacts with the SecYEG preprotein conducting channel. Has a central role in coupling the hydrolysis of ATP to the transfer of proteins into and across the cell membrane, serving both as a receptor for the preprotein-SecB complex and as an ATP-driven molecular motor driving the stepwise translocation of polypeptide chains across the membrane.</text>
</comment>
<comment type="catalytic activity">
    <reaction evidence="1">
        <text>ATP + H2O + cellular proteinSide 1 = ADP + phosphate + cellular proteinSide 2.</text>
        <dbReference type="EC" id="7.4.2.8"/>
    </reaction>
</comment>
<comment type="cofactor">
    <cofactor evidence="1">
        <name>Zn(2+)</name>
        <dbReference type="ChEBI" id="CHEBI:29105"/>
    </cofactor>
    <text evidence="1">May bind 1 zinc ion per subunit.</text>
</comment>
<comment type="subunit">
    <text evidence="1">Monomer and homodimer. Part of the essential Sec protein translocation apparatus which comprises SecA, SecYEG and auxiliary proteins SecDF-YajC and YidC.</text>
</comment>
<comment type="subcellular location">
    <subcellularLocation>
        <location evidence="1">Cell inner membrane</location>
        <topology evidence="1">Peripheral membrane protein</topology>
        <orientation evidence="1">Cytoplasmic side</orientation>
    </subcellularLocation>
    <subcellularLocation>
        <location evidence="1">Cytoplasm</location>
    </subcellularLocation>
    <text evidence="1">Distribution is 50-50.</text>
</comment>
<comment type="similarity">
    <text evidence="1">Belongs to the SecA family.</text>
</comment>
<reference key="1">
    <citation type="journal article" date="2005" name="Science">
        <title>Life at depth: Photobacterium profundum genome sequence and expression analysis.</title>
        <authorList>
            <person name="Vezzi A."/>
            <person name="Campanaro S."/>
            <person name="D'Angelo M."/>
            <person name="Simonato F."/>
            <person name="Vitulo N."/>
            <person name="Lauro F.M."/>
            <person name="Cestaro A."/>
            <person name="Malacrida G."/>
            <person name="Simionati B."/>
            <person name="Cannata N."/>
            <person name="Romualdi C."/>
            <person name="Bartlett D.H."/>
            <person name="Valle G."/>
        </authorList>
    </citation>
    <scope>NUCLEOTIDE SEQUENCE [LARGE SCALE GENOMIC DNA]</scope>
    <source>
        <strain>ATCC BAA-1253 / SS9</strain>
    </source>
</reference>
<keyword id="KW-0067">ATP-binding</keyword>
<keyword id="KW-0997">Cell inner membrane</keyword>
<keyword id="KW-1003">Cell membrane</keyword>
<keyword id="KW-0963">Cytoplasm</keyword>
<keyword id="KW-0472">Membrane</keyword>
<keyword id="KW-0479">Metal-binding</keyword>
<keyword id="KW-0547">Nucleotide-binding</keyword>
<keyword id="KW-0653">Protein transport</keyword>
<keyword id="KW-1185">Reference proteome</keyword>
<keyword id="KW-1278">Translocase</keyword>
<keyword id="KW-0811">Translocation</keyword>
<keyword id="KW-0813">Transport</keyword>
<keyword id="KW-0862">Zinc</keyword>
<protein>
    <recommendedName>
        <fullName evidence="1">Protein translocase subunit SecA</fullName>
        <ecNumber evidence="1">7.4.2.8</ecNumber>
    </recommendedName>
</protein>